<accession>P11236</accession>
<accession>Q783V9</accession>
<sequence>MKVFLVTCLGFAVFSSSVCVNINILQQIGYIKQQVRQLSYYSQSSSSYIVVKLLPNIQPTDNSCEFKSVTQYNKTLSNLLLPIAENINNIASPSSGSRRHKRFAGIAIGIAALGVATAAQVTAAVSLVQAQTNARAIAAMKNSIQATNRAVFEVKEGTQRLAIAVQAIQDHINTIMNTQLNNMSCQILDNQLATSLGLYLTELTTVFQPQLINPALSPISIQALRSLLGSMTPAVVQATLSTSISAAEILSAGLMEGQIVSVLLDEMQMIVKINIPTIVTQSNALVIDFYSISSFINNQESIIQLPDRILEIGNEQWSYPAKNCKLTRHHIFCQYNEAERLSLESKLCLAGNISACVFSPIAGSYMRRFVALDGTIVANCRSLTCLCKSPSYPIYQPDHHAVTTIDLTACQTLSLDGLDFSIVSLSNITYAENLTISLSQTINTQPIDISTELSKVNASLQNAVKYIKESNHQLQSVNVNSKIGAIIVAALVLSILSIIISLLFCCWAYVATKEIRRINFKTNHINTISSSVDDLIRY</sequence>
<reference key="1">
    <citation type="journal article" date="1989" name="Nucleic Acids Res.">
        <title>Cloning and sequencing of the fusion protein gene of mumps virus (Miyahara strain).</title>
        <authorList>
            <person name="Takeuchi K."/>
            <person name="Tanahayashi K."/>
            <person name="Hishiyama M."/>
            <person name="Yamada A."/>
            <person name="Sugiura A."/>
        </authorList>
    </citation>
    <scope>NUCLEOTIDE SEQUENCE [MRNA]</scope>
</reference>
<reference key="2">
    <citation type="journal article" date="1992" name="Virology">
        <title>Molecular cloning and sequence analysis of the mumps virus gene encoding the L protein and the trailer sequence.</title>
        <authorList>
            <person name="Okazaki K."/>
            <person name="Tanabayashi K."/>
            <person name="Takeuchi K."/>
            <person name="Hishiyama M."/>
            <person name="Okazaki K."/>
            <person name="Yamada A."/>
        </authorList>
    </citation>
    <scope>NUCLEOTIDE SEQUENCE [GENOMIC RNA]</scope>
</reference>
<reference key="3">
    <citation type="journal article" date="2020" name="J. Virol.">
        <title>Lysosome-Associated Membrane Proteins Support the Furin-Mediated Processing of the Mumps Virus Fusion Protein.</title>
        <authorList>
            <person name="Ueo A."/>
            <person name="Kubota M."/>
            <person name="Shirogane Y."/>
            <person name="Ohno S."/>
            <person name="Hashiguchi T."/>
            <person name="Yanagi Y."/>
        </authorList>
    </citation>
    <scope>PROCESSING</scope>
    <scope>INTERACTION WITH HOST LAMP1; LAMP2 AND LAMP3</scope>
</reference>
<reference key="4">
    <citation type="journal article" date="2022" name="Viruses">
        <title>Exploring the Mumps Virus Glycoproteins: A Review.</title>
        <authorList>
            <person name="Frost J.R."/>
            <person name="Shaikh S."/>
            <person name="Severini A."/>
        </authorList>
    </citation>
    <scope>REVIEW</scope>
</reference>
<reference evidence="10" key="5">
    <citation type="journal article" date="2006" name="Biochem. Biophys. Res. Commun.">
        <title>Structural characterization of mumps virus fusion protein core.</title>
        <authorList>
            <person name="Liu Y."/>
            <person name="Xu Y."/>
            <person name="Lou Z."/>
            <person name="Zhu J."/>
            <person name="Hu X."/>
            <person name="Gao G.F."/>
            <person name="Qiu B."/>
            <person name="Rao Z."/>
            <person name="Tien P."/>
        </authorList>
    </citation>
    <scope>X-RAY CRYSTALLOGRAPHY (2.20 ANGSTROMS) OF 124-181 AND 447-485</scope>
    <scope>DOMAIN</scope>
    <scope>COILED COIL</scope>
</reference>
<dbReference type="EMBL" id="X15285">
    <property type="protein sequence ID" value="CAA33359.1"/>
    <property type="molecule type" value="mRNA"/>
</dbReference>
<dbReference type="EMBL" id="AB040874">
    <property type="protein sequence ID" value="BAA94388.1"/>
    <property type="molecule type" value="Genomic_RNA"/>
</dbReference>
<dbReference type="PIR" id="A34062">
    <property type="entry name" value="VGNZMM"/>
</dbReference>
<dbReference type="PDB" id="2FYZ">
    <property type="method" value="X-ray"/>
    <property type="resolution" value="2.20 A"/>
    <property type="chains" value="A/C/E=124-181, B/D/F=447-485"/>
</dbReference>
<dbReference type="PDBsum" id="2FYZ"/>
<dbReference type="SMR" id="P11236"/>
<dbReference type="GlyCosmos" id="P11236">
    <property type="glycosylation" value="6 sites, No reported glycans"/>
</dbReference>
<dbReference type="KEGG" id="vg:1489762"/>
<dbReference type="EvolutionaryTrace" id="P11236"/>
<dbReference type="Proteomes" id="UP000002331">
    <property type="component" value="Segment"/>
</dbReference>
<dbReference type="GO" id="GO:0020002">
    <property type="term" value="C:host cell plasma membrane"/>
    <property type="evidence" value="ECO:0007669"/>
    <property type="project" value="UniProtKB-SubCell"/>
</dbReference>
<dbReference type="GO" id="GO:0016020">
    <property type="term" value="C:membrane"/>
    <property type="evidence" value="ECO:0007669"/>
    <property type="project" value="UniProtKB-KW"/>
</dbReference>
<dbReference type="GO" id="GO:0019031">
    <property type="term" value="C:viral envelope"/>
    <property type="evidence" value="ECO:0007669"/>
    <property type="project" value="UniProtKB-KW"/>
</dbReference>
<dbReference type="GO" id="GO:0055036">
    <property type="term" value="C:virion membrane"/>
    <property type="evidence" value="ECO:0007669"/>
    <property type="project" value="UniProtKB-SubCell"/>
</dbReference>
<dbReference type="GO" id="GO:0019064">
    <property type="term" value="P:fusion of virus membrane with host plasma membrane"/>
    <property type="evidence" value="ECO:0007669"/>
    <property type="project" value="UniProtKB-KW"/>
</dbReference>
<dbReference type="GO" id="GO:0046718">
    <property type="term" value="P:symbiont entry into host cell"/>
    <property type="evidence" value="ECO:0007669"/>
    <property type="project" value="UniProtKB-KW"/>
</dbReference>
<dbReference type="Gene3D" id="1.10.287.2480">
    <property type="match status" value="1"/>
</dbReference>
<dbReference type="Gene3D" id="6.10.10.110">
    <property type="match status" value="1"/>
</dbReference>
<dbReference type="Gene3D" id="2.60.40.1690">
    <property type="entry name" value="Head and neck region of the ectodomain of NDV fusion glycoprotein"/>
    <property type="match status" value="1"/>
</dbReference>
<dbReference type="Gene3D" id="2.40.490.10">
    <property type="entry name" value="Newcastle disease virus like domain"/>
    <property type="match status" value="1"/>
</dbReference>
<dbReference type="Gene3D" id="1.10.287.770">
    <property type="entry name" value="YojJ-like"/>
    <property type="match status" value="1"/>
</dbReference>
<dbReference type="InterPro" id="IPR000776">
    <property type="entry name" value="Fusion_F0_Paramyxovir"/>
</dbReference>
<dbReference type="Pfam" id="PF00523">
    <property type="entry name" value="Fusion_gly"/>
    <property type="match status" value="1"/>
</dbReference>
<dbReference type="SUPFAM" id="SSF69922">
    <property type="entry name" value="Head and neck region of the ectodomain of NDV fusion glycoprotein"/>
    <property type="match status" value="1"/>
</dbReference>
<dbReference type="SUPFAM" id="SSF58069">
    <property type="entry name" value="Virus ectodomain"/>
    <property type="match status" value="1"/>
</dbReference>
<organism>
    <name type="scientific">Mumps virus genotype B (strain Miyahara vaccine)</name>
    <name type="common">MuV</name>
    <dbReference type="NCBI Taxonomy" id="11171"/>
    <lineage>
        <taxon>Viruses</taxon>
        <taxon>Riboviria</taxon>
        <taxon>Orthornavirae</taxon>
        <taxon>Negarnaviricota</taxon>
        <taxon>Haploviricotina</taxon>
        <taxon>Monjiviricetes</taxon>
        <taxon>Mononegavirales</taxon>
        <taxon>Paramyxoviridae</taxon>
        <taxon>Rubulavirinae</taxon>
        <taxon>Orthorubulavirus</taxon>
        <taxon>Orthorubulavirus parotitidis</taxon>
        <taxon>Mumps orthorubulavirus</taxon>
    </lineage>
</organism>
<name>FUS_MUMPM</name>
<evidence type="ECO:0000250" key="1"/>
<evidence type="ECO:0000250" key="2">
    <source>
        <dbReference type="UniProtKB" id="P09458"/>
    </source>
</evidence>
<evidence type="ECO:0000250" key="3">
    <source>
        <dbReference type="UniProtKB" id="Q5SC53"/>
    </source>
</evidence>
<evidence type="ECO:0000250" key="4">
    <source>
        <dbReference type="UniProtKB" id="Q786F3"/>
    </source>
</evidence>
<evidence type="ECO:0000255" key="5"/>
<evidence type="ECO:0000269" key="6">
    <source>
    </source>
</evidence>
<evidence type="ECO:0000269" key="7">
    <source>
    </source>
</evidence>
<evidence type="ECO:0000303" key="8">
    <source>
    </source>
</evidence>
<evidence type="ECO:0000305" key="9"/>
<evidence type="ECO:0007744" key="10">
    <source>
        <dbReference type="PDB" id="2FYZ"/>
    </source>
</evidence>
<evidence type="ECO:0007829" key="11">
    <source>
        <dbReference type="PDB" id="2FYZ"/>
    </source>
</evidence>
<gene>
    <name type="primary">F</name>
</gene>
<comment type="function">
    <text evidence="1">Class I viral fusion protein. Under the current model, the protein has at least 3 conformational states: pre-fusion native state, pre-hairpin intermediate state, and post-fusion hairpin state. During viral and plasma cell membrane fusion, the heptad repeat (HR) regions assume a trimer-of-hairpins structure, positioning the fusion peptide in close proximity to the C-terminal region of the ectodomain. The formation of this structure appears to drive apposition and subsequent fusion of viral and plasma cell membranes. Directs fusion of viral and cellular membranes leading to delivery of the nucleocapsid into the cytoplasm. This fusion is pH independent and occurs directly at the outer cell membrane. The trimer of F1-F2 (F protein) probably interacts with HN at the virion surface. Upon HN binding to its cellular receptor, the hydrophobic fusion peptide is unmasked and interacts with the cellular membrane, inducing the fusion between cell and virion membranes. Later in infection, F proteins expressed at the plasma membrane of infected cells could mediate fusion with adjacent cells to form syncytia, a cytopathic effect that could lead to tissue necrosis (By similarity).</text>
</comment>
<comment type="subunit">
    <text evidence="7 8">Homotrimer; disulfide-linked F1-F2 (PubMed:16904649). Interacts with host LAMP1; LAMP2 and LAMP3; these interactions promote the cleavage of the viral fusion protein F (PubMed:32295904).</text>
</comment>
<comment type="subcellular location">
    <subcellularLocation>
        <location evidence="1">Virion membrane</location>
        <topology evidence="1">Single-pass type I membrane protein</topology>
    </subcellularLocation>
    <subcellularLocation>
        <location evidence="1">Host cell membrane</location>
        <topology evidence="1">Single-pass membrane protein</topology>
    </subcellularLocation>
</comment>
<comment type="domain">
    <text evidence="6">The 2 coiled coil regions form a stable six-helix bundle.</text>
</comment>
<comment type="PTM">
    <text evidence="7">The inactive precursor F0 is glycosylated and proteolytically cleaved into F1 and F2 to be functionally active. The cleavage is mediated by cellular proteases including host FURIN during the transport and maturation of the polypeptide.</text>
</comment>
<comment type="similarity">
    <text evidence="9">Belongs to the paramyxoviruses fusion glycoprotein family.</text>
</comment>
<keyword id="KW-0002">3D-structure</keyword>
<keyword id="KW-0165">Cleavage on pair of basic residues</keyword>
<keyword id="KW-0175">Coiled coil</keyword>
<keyword id="KW-1015">Disulfide bond</keyword>
<keyword id="KW-1169">Fusion of virus membrane with host cell membrane</keyword>
<keyword id="KW-1168">Fusion of virus membrane with host membrane</keyword>
<keyword id="KW-0325">Glycoprotein</keyword>
<keyword id="KW-1032">Host cell membrane</keyword>
<keyword id="KW-1043">Host membrane</keyword>
<keyword id="KW-0472">Membrane</keyword>
<keyword id="KW-1185">Reference proteome</keyword>
<keyword id="KW-0732">Signal</keyword>
<keyword id="KW-0812">Transmembrane</keyword>
<keyword id="KW-1133">Transmembrane helix</keyword>
<keyword id="KW-0261">Viral envelope protein</keyword>
<keyword id="KW-1162">Viral penetration into host cytoplasm</keyword>
<keyword id="KW-0946">Virion</keyword>
<keyword id="KW-1160">Virus entry into host cell</keyword>
<proteinExistence type="evidence at protein level"/>
<protein>
    <recommendedName>
        <fullName>Fusion glycoprotein F0</fullName>
    </recommendedName>
    <component>
        <recommendedName>
            <fullName>Fusion glycoprotein F2</fullName>
        </recommendedName>
    </component>
    <component>
        <recommendedName>
            <fullName>Fusion glycoprotein F1</fullName>
        </recommendedName>
    </component>
</protein>
<feature type="signal peptide" evidence="2">
    <location>
        <begin position="1"/>
        <end position="19"/>
    </location>
</feature>
<feature type="chain" id="PRO_0000039279" description="Fusion glycoprotein F0">
    <location>
        <begin position="20"/>
        <end position="538"/>
    </location>
</feature>
<feature type="chain" id="PRO_0000039280" description="Fusion glycoprotein F2">
    <location>
        <begin position="20"/>
        <end position="102"/>
    </location>
</feature>
<feature type="chain" id="PRO_0000039281" description="Fusion glycoprotein F1">
    <location>
        <begin position="103"/>
        <end position="538"/>
    </location>
</feature>
<feature type="topological domain" description="Extracellular" evidence="1">
    <location>
        <begin position="20"/>
        <end position="486"/>
    </location>
</feature>
<feature type="transmembrane region" description="Helical" evidence="5">
    <location>
        <begin position="487"/>
        <end position="507"/>
    </location>
</feature>
<feature type="topological domain" description="Cytoplasmic" evidence="1">
    <location>
        <begin position="508"/>
        <end position="538"/>
    </location>
</feature>
<feature type="region of interest" description="Fusion peptide" evidence="4">
    <location>
        <begin position="103"/>
        <end position="127"/>
    </location>
</feature>
<feature type="coiled-coil region" evidence="5">
    <location>
        <begin position="128"/>
        <end position="156"/>
    </location>
</feature>
<feature type="coiled-coil region" evidence="5">
    <location>
        <begin position="452"/>
        <end position="477"/>
    </location>
</feature>
<feature type="site" description="Cleavage; by host" evidence="3">
    <location>
        <begin position="102"/>
        <end position="103"/>
    </location>
</feature>
<feature type="glycosylation site" description="N-linked (GlcNAc...) asparagine; by host" evidence="4">
    <location>
        <position position="56"/>
    </location>
</feature>
<feature type="glycosylation site" description="N-linked (GlcNAc...) asparagine; by host" evidence="5">
    <location>
        <position position="73"/>
    </location>
</feature>
<feature type="glycosylation site" description="N-linked (GlcNAc...) asparagine; by host" evidence="5">
    <location>
        <position position="182"/>
    </location>
</feature>
<feature type="glycosylation site" description="N-linked (GlcNAc...) asparagine; by host" evidence="5">
    <location>
        <position position="352"/>
    </location>
</feature>
<feature type="glycosylation site" description="N-linked (GlcNAc...) asparagine; by host" evidence="5">
    <location>
        <position position="427"/>
    </location>
</feature>
<feature type="glycosylation site" description="N-linked (GlcNAc...) asparagine; by host" evidence="5">
    <location>
        <position position="433"/>
    </location>
</feature>
<feature type="glycosylation site" description="N-linked (GlcNAc...) asparagine; by host" evidence="5">
    <location>
        <position position="457"/>
    </location>
</feature>
<feature type="disulfide bond" description="Interchain (with C-195)" evidence="4">
    <location>
        <position position="64"/>
    </location>
</feature>
<feature type="disulfide bond" description="Interchain (with C-68)" evidence="4">
    <location>
        <position position="185"/>
    </location>
</feature>
<feature type="disulfide bond" evidence="4">
    <location>
        <begin position="324"/>
        <end position="333"/>
    </location>
</feature>
<feature type="disulfide bond" evidence="4">
    <location>
        <begin position="348"/>
        <end position="356"/>
    </location>
</feature>
<feature type="disulfide bond" evidence="4">
    <location>
        <begin position="380"/>
        <end position="385"/>
    </location>
</feature>
<feature type="disulfide bond" evidence="4">
    <location>
        <begin position="387"/>
        <end position="410"/>
    </location>
</feature>
<feature type="helix" evidence="11">
    <location>
        <begin position="126"/>
        <end position="173"/>
    </location>
</feature>
<feature type="turn" evidence="11">
    <location>
        <begin position="174"/>
        <end position="178"/>
    </location>
</feature>
<feature type="helix" evidence="11">
    <location>
        <begin position="449"/>
        <end position="474"/>
    </location>
</feature>
<feature type="turn" evidence="11">
    <location>
        <begin position="475"/>
        <end position="478"/>
    </location>
</feature>
<organismHost>
    <name type="scientific">Homo sapiens</name>
    <name type="common">Human</name>
    <dbReference type="NCBI Taxonomy" id="9606"/>
</organismHost>